<feature type="chain" id="PRO_0000260121" description="Small ribosomal subunit protein bS20">
    <location>
        <begin position="1"/>
        <end position="88"/>
    </location>
</feature>
<feature type="region of interest" description="Disordered" evidence="2">
    <location>
        <begin position="1"/>
        <end position="25"/>
    </location>
</feature>
<feature type="region of interest" description="Disordered" evidence="2">
    <location>
        <begin position="61"/>
        <end position="88"/>
    </location>
</feature>
<comment type="function">
    <text evidence="1">Binds directly to 16S ribosomal RNA.</text>
</comment>
<comment type="similarity">
    <text evidence="1">Belongs to the bacterial ribosomal protein bS20 family.</text>
</comment>
<keyword id="KW-1185">Reference proteome</keyword>
<keyword id="KW-0687">Ribonucleoprotein</keyword>
<keyword id="KW-0689">Ribosomal protein</keyword>
<keyword id="KW-0694">RNA-binding</keyword>
<keyword id="KW-0699">rRNA-binding</keyword>
<organism>
    <name type="scientific">Jannaschia sp. (strain CCS1)</name>
    <dbReference type="NCBI Taxonomy" id="290400"/>
    <lineage>
        <taxon>Bacteria</taxon>
        <taxon>Pseudomonadati</taxon>
        <taxon>Pseudomonadota</taxon>
        <taxon>Alphaproteobacteria</taxon>
        <taxon>Rhodobacterales</taxon>
        <taxon>Roseobacteraceae</taxon>
        <taxon>Jannaschia</taxon>
    </lineage>
</organism>
<accession>Q28JI3</accession>
<evidence type="ECO:0000255" key="1">
    <source>
        <dbReference type="HAMAP-Rule" id="MF_00500"/>
    </source>
</evidence>
<evidence type="ECO:0000256" key="2">
    <source>
        <dbReference type="SAM" id="MobiDB-lite"/>
    </source>
</evidence>
<evidence type="ECO:0000305" key="3"/>
<reference key="1">
    <citation type="submission" date="2006-02" db="EMBL/GenBank/DDBJ databases">
        <title>Complete sequence of chromosome of Jannaschia sp. CCS1.</title>
        <authorList>
            <consortium name="US DOE Joint Genome Institute"/>
            <person name="Copeland A."/>
            <person name="Lucas S."/>
            <person name="Lapidus A."/>
            <person name="Barry K."/>
            <person name="Detter J.C."/>
            <person name="Glavina del Rio T."/>
            <person name="Hammon N."/>
            <person name="Israni S."/>
            <person name="Pitluck S."/>
            <person name="Brettin T."/>
            <person name="Bruce D."/>
            <person name="Han C."/>
            <person name="Tapia R."/>
            <person name="Gilna P."/>
            <person name="Chertkov O."/>
            <person name="Saunders E."/>
            <person name="Schmutz J."/>
            <person name="Larimer F."/>
            <person name="Land M."/>
            <person name="Kyrpides N."/>
            <person name="Lykidis A."/>
            <person name="Moran M.A."/>
            <person name="Belas R."/>
            <person name="Ye W."/>
            <person name="Buchan A."/>
            <person name="Gonzalez J.M."/>
            <person name="Schell M.A."/>
            <person name="Richardson P."/>
        </authorList>
    </citation>
    <scope>NUCLEOTIDE SEQUENCE [LARGE SCALE GENOMIC DNA]</scope>
    <source>
        <strain>CCS1</strain>
    </source>
</reference>
<protein>
    <recommendedName>
        <fullName evidence="1">Small ribosomal subunit protein bS20</fullName>
    </recommendedName>
    <alternativeName>
        <fullName evidence="3">30S ribosomal protein S20</fullName>
    </alternativeName>
</protein>
<gene>
    <name evidence="1" type="primary">rpsT</name>
    <name type="ordered locus">Jann_4212</name>
</gene>
<dbReference type="EMBL" id="CP000264">
    <property type="protein sequence ID" value="ABD57129.1"/>
    <property type="molecule type" value="Genomic_DNA"/>
</dbReference>
<dbReference type="RefSeq" id="WP_011457325.1">
    <property type="nucleotide sequence ID" value="NC_007802.1"/>
</dbReference>
<dbReference type="SMR" id="Q28JI3"/>
<dbReference type="STRING" id="290400.Jann_4212"/>
<dbReference type="KEGG" id="jan:Jann_4212"/>
<dbReference type="eggNOG" id="COG0268">
    <property type="taxonomic scope" value="Bacteria"/>
</dbReference>
<dbReference type="HOGENOM" id="CLU_160655_3_0_5"/>
<dbReference type="OrthoDB" id="9807974at2"/>
<dbReference type="Proteomes" id="UP000008326">
    <property type="component" value="Chromosome"/>
</dbReference>
<dbReference type="GO" id="GO:0015935">
    <property type="term" value="C:small ribosomal subunit"/>
    <property type="evidence" value="ECO:0007669"/>
    <property type="project" value="TreeGrafter"/>
</dbReference>
<dbReference type="GO" id="GO:0070181">
    <property type="term" value="F:small ribosomal subunit rRNA binding"/>
    <property type="evidence" value="ECO:0007669"/>
    <property type="project" value="TreeGrafter"/>
</dbReference>
<dbReference type="GO" id="GO:0003735">
    <property type="term" value="F:structural constituent of ribosome"/>
    <property type="evidence" value="ECO:0007669"/>
    <property type="project" value="InterPro"/>
</dbReference>
<dbReference type="GO" id="GO:0006412">
    <property type="term" value="P:translation"/>
    <property type="evidence" value="ECO:0007669"/>
    <property type="project" value="UniProtKB-UniRule"/>
</dbReference>
<dbReference type="FunFam" id="1.20.58.110:FF:000001">
    <property type="entry name" value="30S ribosomal protein S20"/>
    <property type="match status" value="1"/>
</dbReference>
<dbReference type="Gene3D" id="1.20.58.110">
    <property type="entry name" value="Ribosomal protein S20"/>
    <property type="match status" value="1"/>
</dbReference>
<dbReference type="HAMAP" id="MF_00500">
    <property type="entry name" value="Ribosomal_bS20"/>
    <property type="match status" value="1"/>
</dbReference>
<dbReference type="InterPro" id="IPR002583">
    <property type="entry name" value="Ribosomal_bS20"/>
</dbReference>
<dbReference type="InterPro" id="IPR036510">
    <property type="entry name" value="Ribosomal_bS20_sf"/>
</dbReference>
<dbReference type="NCBIfam" id="TIGR00029">
    <property type="entry name" value="S20"/>
    <property type="match status" value="1"/>
</dbReference>
<dbReference type="PANTHER" id="PTHR33398">
    <property type="entry name" value="30S RIBOSOMAL PROTEIN S20"/>
    <property type="match status" value="1"/>
</dbReference>
<dbReference type="PANTHER" id="PTHR33398:SF1">
    <property type="entry name" value="SMALL RIBOSOMAL SUBUNIT PROTEIN BS20C"/>
    <property type="match status" value="1"/>
</dbReference>
<dbReference type="Pfam" id="PF01649">
    <property type="entry name" value="Ribosomal_S20p"/>
    <property type="match status" value="1"/>
</dbReference>
<dbReference type="SUPFAM" id="SSF46992">
    <property type="entry name" value="Ribosomal protein S20"/>
    <property type="match status" value="1"/>
</dbReference>
<proteinExistence type="inferred from homology"/>
<sequence length="88" mass="9670">MANSPQAKKRARQNERRFAINKARRSRIRTHLRTVEEAIASGDQAAATAALKAAQPEMMRGVTKGVMHKNTAARKMSRLSSRVKALGA</sequence>
<name>RS20_JANSC</name>